<feature type="chain" id="PRO_0000322816" description="Holliday junction branch migration complex subunit RuvB">
    <location>
        <begin position="1"/>
        <end position="357"/>
    </location>
</feature>
<feature type="region of interest" description="Large ATPase domain (RuvB-L)" evidence="1">
    <location>
        <begin position="1"/>
        <end position="195"/>
    </location>
</feature>
<feature type="region of interest" description="Disordered" evidence="2">
    <location>
        <begin position="1"/>
        <end position="27"/>
    </location>
</feature>
<feature type="region of interest" description="Small ATPAse domain (RuvB-S)" evidence="1">
    <location>
        <begin position="196"/>
        <end position="266"/>
    </location>
</feature>
<feature type="region of interest" description="Head domain (RuvB-H)" evidence="1">
    <location>
        <begin position="269"/>
        <end position="357"/>
    </location>
</feature>
<feature type="binding site" evidence="1">
    <location>
        <position position="34"/>
    </location>
    <ligand>
        <name>ATP</name>
        <dbReference type="ChEBI" id="CHEBI:30616"/>
    </ligand>
</feature>
<feature type="binding site" evidence="1">
    <location>
        <position position="35"/>
    </location>
    <ligand>
        <name>ATP</name>
        <dbReference type="ChEBI" id="CHEBI:30616"/>
    </ligand>
</feature>
<feature type="binding site" evidence="1">
    <location>
        <position position="76"/>
    </location>
    <ligand>
        <name>ATP</name>
        <dbReference type="ChEBI" id="CHEBI:30616"/>
    </ligand>
</feature>
<feature type="binding site" evidence="1">
    <location>
        <position position="79"/>
    </location>
    <ligand>
        <name>ATP</name>
        <dbReference type="ChEBI" id="CHEBI:30616"/>
    </ligand>
</feature>
<feature type="binding site" evidence="1">
    <location>
        <position position="80"/>
    </location>
    <ligand>
        <name>ATP</name>
        <dbReference type="ChEBI" id="CHEBI:30616"/>
    </ligand>
</feature>
<feature type="binding site" evidence="1">
    <location>
        <position position="80"/>
    </location>
    <ligand>
        <name>Mg(2+)</name>
        <dbReference type="ChEBI" id="CHEBI:18420"/>
    </ligand>
</feature>
<feature type="binding site" evidence="1">
    <location>
        <position position="81"/>
    </location>
    <ligand>
        <name>ATP</name>
        <dbReference type="ChEBI" id="CHEBI:30616"/>
    </ligand>
</feature>
<feature type="binding site" evidence="1">
    <location>
        <begin position="142"/>
        <end position="144"/>
    </location>
    <ligand>
        <name>ATP</name>
        <dbReference type="ChEBI" id="CHEBI:30616"/>
    </ligand>
</feature>
<feature type="binding site" evidence="1">
    <location>
        <position position="185"/>
    </location>
    <ligand>
        <name>ATP</name>
        <dbReference type="ChEBI" id="CHEBI:30616"/>
    </ligand>
</feature>
<feature type="binding site" evidence="1">
    <location>
        <position position="195"/>
    </location>
    <ligand>
        <name>ATP</name>
        <dbReference type="ChEBI" id="CHEBI:30616"/>
    </ligand>
</feature>
<feature type="binding site" evidence="1">
    <location>
        <position position="232"/>
    </location>
    <ligand>
        <name>ATP</name>
        <dbReference type="ChEBI" id="CHEBI:30616"/>
    </ligand>
</feature>
<feature type="binding site" evidence="1">
    <location>
        <position position="324"/>
    </location>
    <ligand>
        <name>DNA</name>
        <dbReference type="ChEBI" id="CHEBI:16991"/>
    </ligand>
</feature>
<feature type="binding site" evidence="1">
    <location>
        <position position="329"/>
    </location>
    <ligand>
        <name>DNA</name>
        <dbReference type="ChEBI" id="CHEBI:16991"/>
    </ligand>
</feature>
<organism>
    <name type="scientific">Mycobacterium sp. (strain JLS)</name>
    <dbReference type="NCBI Taxonomy" id="164757"/>
    <lineage>
        <taxon>Bacteria</taxon>
        <taxon>Bacillati</taxon>
        <taxon>Actinomycetota</taxon>
        <taxon>Actinomycetes</taxon>
        <taxon>Mycobacteriales</taxon>
        <taxon>Mycobacteriaceae</taxon>
        <taxon>Mycobacterium</taxon>
    </lineage>
</organism>
<dbReference type="EC" id="3.6.4.-" evidence="1"/>
<dbReference type="EMBL" id="CP000580">
    <property type="protein sequence ID" value="ABN98092.1"/>
    <property type="molecule type" value="Genomic_DNA"/>
</dbReference>
<dbReference type="SMR" id="A3PYW5"/>
<dbReference type="KEGG" id="mjl:Mjls_2306"/>
<dbReference type="HOGENOM" id="CLU_055599_1_0_11"/>
<dbReference type="BioCyc" id="MSP164757:G1G8C-2325-MONOMER"/>
<dbReference type="GO" id="GO:0005737">
    <property type="term" value="C:cytoplasm"/>
    <property type="evidence" value="ECO:0007669"/>
    <property type="project" value="UniProtKB-SubCell"/>
</dbReference>
<dbReference type="GO" id="GO:0048476">
    <property type="term" value="C:Holliday junction resolvase complex"/>
    <property type="evidence" value="ECO:0007669"/>
    <property type="project" value="UniProtKB-UniRule"/>
</dbReference>
<dbReference type="GO" id="GO:0005524">
    <property type="term" value="F:ATP binding"/>
    <property type="evidence" value="ECO:0007669"/>
    <property type="project" value="UniProtKB-UniRule"/>
</dbReference>
<dbReference type="GO" id="GO:0016887">
    <property type="term" value="F:ATP hydrolysis activity"/>
    <property type="evidence" value="ECO:0007669"/>
    <property type="project" value="InterPro"/>
</dbReference>
<dbReference type="GO" id="GO:0000400">
    <property type="term" value="F:four-way junction DNA binding"/>
    <property type="evidence" value="ECO:0007669"/>
    <property type="project" value="UniProtKB-UniRule"/>
</dbReference>
<dbReference type="GO" id="GO:0009378">
    <property type="term" value="F:four-way junction helicase activity"/>
    <property type="evidence" value="ECO:0007669"/>
    <property type="project" value="InterPro"/>
</dbReference>
<dbReference type="GO" id="GO:0006310">
    <property type="term" value="P:DNA recombination"/>
    <property type="evidence" value="ECO:0007669"/>
    <property type="project" value="UniProtKB-UniRule"/>
</dbReference>
<dbReference type="GO" id="GO:0006281">
    <property type="term" value="P:DNA repair"/>
    <property type="evidence" value="ECO:0007669"/>
    <property type="project" value="UniProtKB-UniRule"/>
</dbReference>
<dbReference type="CDD" id="cd00009">
    <property type="entry name" value="AAA"/>
    <property type="match status" value="1"/>
</dbReference>
<dbReference type="Gene3D" id="1.10.8.60">
    <property type="match status" value="1"/>
</dbReference>
<dbReference type="Gene3D" id="3.40.50.300">
    <property type="entry name" value="P-loop containing nucleotide triphosphate hydrolases"/>
    <property type="match status" value="1"/>
</dbReference>
<dbReference type="Gene3D" id="1.10.10.10">
    <property type="entry name" value="Winged helix-like DNA-binding domain superfamily/Winged helix DNA-binding domain"/>
    <property type="match status" value="1"/>
</dbReference>
<dbReference type="HAMAP" id="MF_00016">
    <property type="entry name" value="DNA_HJ_migration_RuvB"/>
    <property type="match status" value="1"/>
</dbReference>
<dbReference type="InterPro" id="IPR003593">
    <property type="entry name" value="AAA+_ATPase"/>
</dbReference>
<dbReference type="InterPro" id="IPR041445">
    <property type="entry name" value="AAA_lid_4"/>
</dbReference>
<dbReference type="InterPro" id="IPR004605">
    <property type="entry name" value="DNA_helicase_Holl-junc_RuvB"/>
</dbReference>
<dbReference type="InterPro" id="IPR027417">
    <property type="entry name" value="P-loop_NTPase"/>
</dbReference>
<dbReference type="InterPro" id="IPR008824">
    <property type="entry name" value="RuvB-like_N"/>
</dbReference>
<dbReference type="InterPro" id="IPR008823">
    <property type="entry name" value="RuvB_C"/>
</dbReference>
<dbReference type="InterPro" id="IPR036388">
    <property type="entry name" value="WH-like_DNA-bd_sf"/>
</dbReference>
<dbReference type="InterPro" id="IPR036390">
    <property type="entry name" value="WH_DNA-bd_sf"/>
</dbReference>
<dbReference type="NCBIfam" id="NF000868">
    <property type="entry name" value="PRK00080.1"/>
    <property type="match status" value="1"/>
</dbReference>
<dbReference type="NCBIfam" id="TIGR00635">
    <property type="entry name" value="ruvB"/>
    <property type="match status" value="1"/>
</dbReference>
<dbReference type="PANTHER" id="PTHR42848">
    <property type="match status" value="1"/>
</dbReference>
<dbReference type="PANTHER" id="PTHR42848:SF1">
    <property type="entry name" value="HOLLIDAY JUNCTION BRANCH MIGRATION COMPLEX SUBUNIT RUVB"/>
    <property type="match status" value="1"/>
</dbReference>
<dbReference type="Pfam" id="PF17864">
    <property type="entry name" value="AAA_lid_4"/>
    <property type="match status" value="1"/>
</dbReference>
<dbReference type="Pfam" id="PF05491">
    <property type="entry name" value="RuvB_C"/>
    <property type="match status" value="1"/>
</dbReference>
<dbReference type="Pfam" id="PF05496">
    <property type="entry name" value="RuvB_N"/>
    <property type="match status" value="1"/>
</dbReference>
<dbReference type="SMART" id="SM00382">
    <property type="entry name" value="AAA"/>
    <property type="match status" value="1"/>
</dbReference>
<dbReference type="SUPFAM" id="SSF52540">
    <property type="entry name" value="P-loop containing nucleoside triphosphate hydrolases"/>
    <property type="match status" value="1"/>
</dbReference>
<dbReference type="SUPFAM" id="SSF46785">
    <property type="entry name" value="Winged helix' DNA-binding domain"/>
    <property type="match status" value="1"/>
</dbReference>
<evidence type="ECO:0000255" key="1">
    <source>
        <dbReference type="HAMAP-Rule" id="MF_00016"/>
    </source>
</evidence>
<evidence type="ECO:0000256" key="2">
    <source>
        <dbReference type="SAM" id="MobiDB-lite"/>
    </source>
</evidence>
<accession>A3PYW5</accession>
<comment type="function">
    <text evidence="1">The RuvA-RuvB-RuvC complex processes Holliday junction (HJ) DNA during genetic recombination and DNA repair, while the RuvA-RuvB complex plays an important role in the rescue of blocked DNA replication forks via replication fork reversal (RFR). RuvA specifically binds to HJ cruciform DNA, conferring on it an open structure. The RuvB hexamer acts as an ATP-dependent pump, pulling dsDNA into and through the RuvAB complex. RuvB forms 2 homohexamers on either side of HJ DNA bound by 1 or 2 RuvA tetramers; 4 subunits per hexamer contact DNA at a time. Coordinated motions by a converter formed by DNA-disengaged RuvB subunits stimulates ATP hydrolysis and nucleotide exchange. Immobilization of the converter enables RuvB to convert the ATP-contained energy into a lever motion, pulling 2 nucleotides of DNA out of the RuvA tetramer per ATP hydrolyzed, thus driving DNA branch migration. The RuvB motors rotate together with the DNA substrate, which together with the progressing nucleotide cycle form the mechanistic basis for DNA recombination by continuous HJ branch migration. Branch migration allows RuvC to scan DNA until it finds its consensus sequence, where it cleaves and resolves cruciform DNA.</text>
</comment>
<comment type="catalytic activity">
    <reaction evidence="1">
        <text>ATP + H2O = ADP + phosphate + H(+)</text>
        <dbReference type="Rhea" id="RHEA:13065"/>
        <dbReference type="ChEBI" id="CHEBI:15377"/>
        <dbReference type="ChEBI" id="CHEBI:15378"/>
        <dbReference type="ChEBI" id="CHEBI:30616"/>
        <dbReference type="ChEBI" id="CHEBI:43474"/>
        <dbReference type="ChEBI" id="CHEBI:456216"/>
    </reaction>
</comment>
<comment type="subunit">
    <text evidence="1">Homohexamer. Forms an RuvA(8)-RuvB(12)-Holliday junction (HJ) complex. HJ DNA is sandwiched between 2 RuvA tetramers; dsDNA enters through RuvA and exits via RuvB. An RuvB hexamer assembles on each DNA strand where it exits the tetramer. Each RuvB hexamer is contacted by two RuvA subunits (via domain III) on 2 adjacent RuvB subunits; this complex drives branch migration. In the full resolvosome a probable DNA-RuvA(4)-RuvB(12)-RuvC(2) complex forms which resolves the HJ.</text>
</comment>
<comment type="subcellular location">
    <subcellularLocation>
        <location evidence="1">Cytoplasm</location>
    </subcellularLocation>
</comment>
<comment type="domain">
    <text evidence="1">Has 3 domains, the large (RuvB-L) and small ATPase (RuvB-S) domains and the C-terminal head (RuvB-H) domain. The head domain binds DNA, while the ATPase domains jointly bind ATP, ADP or are empty depending on the state of the subunit in the translocation cycle. During a single DNA translocation step the structure of each domain remains the same, but their relative positions change.</text>
</comment>
<comment type="similarity">
    <text evidence="1">Belongs to the RuvB family.</text>
</comment>
<sequence length="357" mass="37803">MGRFDDAGAQDAEPDDRDVSPALTVGEGDIDASLRPRSLGEFIGQPRVREQLQLVLEGAKNRGGTPDHILLSGPPGLGKTSLAMIIAAELSSSLRVTSGPALERAGDLAAMLSNLVEGDVLFIDEIHRIARPAEEMLYLAMEDFRVDVVVGKGPGATSIPLEVAPFTLVGATTRSGALTGPLRDRFGFTAHMDFYEPAELERVLARSAGILGIHLGTEAGAEIARRSRGTPRIANRLLRRVRDYAEVRADGVITRDIAKAALEVYDVDELGLDRLDRAVLSALIRSFGGGPVGVSTLAVAVGEEPTTVEEVCEPFLVRAGMIARTPRGRVATASAWTHLGLTPPSGITGLGQTGLFD</sequence>
<protein>
    <recommendedName>
        <fullName evidence="1">Holliday junction branch migration complex subunit RuvB</fullName>
        <ecNumber evidence="1">3.6.4.-</ecNumber>
    </recommendedName>
</protein>
<gene>
    <name evidence="1" type="primary">ruvB</name>
    <name type="ordered locus">Mjls_2306</name>
</gene>
<keyword id="KW-0067">ATP-binding</keyword>
<keyword id="KW-0963">Cytoplasm</keyword>
<keyword id="KW-0227">DNA damage</keyword>
<keyword id="KW-0233">DNA recombination</keyword>
<keyword id="KW-0234">DNA repair</keyword>
<keyword id="KW-0238">DNA-binding</keyword>
<keyword id="KW-0378">Hydrolase</keyword>
<keyword id="KW-0547">Nucleotide-binding</keyword>
<proteinExistence type="inferred from homology"/>
<name>RUVB_MYCSJ</name>
<reference key="1">
    <citation type="submission" date="2007-02" db="EMBL/GenBank/DDBJ databases">
        <title>Complete sequence of Mycobacterium sp. JLS.</title>
        <authorList>
            <consortium name="US DOE Joint Genome Institute"/>
            <person name="Copeland A."/>
            <person name="Lucas S."/>
            <person name="Lapidus A."/>
            <person name="Barry K."/>
            <person name="Detter J.C."/>
            <person name="Glavina del Rio T."/>
            <person name="Hammon N."/>
            <person name="Israni S."/>
            <person name="Dalin E."/>
            <person name="Tice H."/>
            <person name="Pitluck S."/>
            <person name="Chain P."/>
            <person name="Malfatti S."/>
            <person name="Shin M."/>
            <person name="Vergez L."/>
            <person name="Schmutz J."/>
            <person name="Larimer F."/>
            <person name="Land M."/>
            <person name="Hauser L."/>
            <person name="Kyrpides N."/>
            <person name="Mikhailova N."/>
            <person name="Miller C.D."/>
            <person name="Anderson A.J."/>
            <person name="Sims R.C."/>
            <person name="Richardson P."/>
        </authorList>
    </citation>
    <scope>NUCLEOTIDE SEQUENCE [LARGE SCALE GENOMIC DNA]</scope>
    <source>
        <strain>JLS</strain>
    </source>
</reference>